<evidence type="ECO:0000305" key="1"/>
<evidence type="ECO:0007829" key="2">
    <source>
        <dbReference type="PDB" id="5I3E"/>
    </source>
</evidence>
<evidence type="ECO:0007829" key="3">
    <source>
        <dbReference type="PDB" id="5UNB"/>
    </source>
</evidence>
<reference key="1">
    <citation type="journal article" date="2005" name="BMC Genomics">
        <title>Bacterial genome adaptation to niches: divergence of the potential virulence genes in three Burkholderia species of different survival strategies.</title>
        <authorList>
            <person name="Kim H.S."/>
            <person name="Schell M.A."/>
            <person name="Yu Y."/>
            <person name="Ulrich R.L."/>
            <person name="Sarria S.H."/>
            <person name="Nierman W.C."/>
            <person name="DeShazer D."/>
        </authorList>
    </citation>
    <scope>NUCLEOTIDE SEQUENCE [LARGE SCALE GENOMIC DNA]</scope>
    <source>
        <strain>ATCC 700388 / DSM 13276 / CCUG 48851 / CIP 106301 / E264</strain>
    </source>
</reference>
<accession>Q2T8B0</accession>
<gene>
    <name type="ordered locus">BTH_II0389</name>
</gene>
<proteinExistence type="evidence at protein level"/>
<name>DNS2_BURTA</name>
<protein>
    <recommendedName>
        <fullName>Putative deoxyribonuclease-2</fullName>
        <ecNumber>3.1.-.-</ecNumber>
    </recommendedName>
    <alternativeName>
        <fullName>Deoxyribonuclease II</fullName>
    </alternativeName>
</protein>
<organism>
    <name type="scientific">Burkholderia thailandensis (strain ATCC 700388 / DSM 13276 / CCUG 48851 / CIP 106301 / E264)</name>
    <dbReference type="NCBI Taxonomy" id="271848"/>
    <lineage>
        <taxon>Bacteria</taxon>
        <taxon>Pseudomonadati</taxon>
        <taxon>Pseudomonadota</taxon>
        <taxon>Betaproteobacteria</taxon>
        <taxon>Burkholderiales</taxon>
        <taxon>Burkholderiaceae</taxon>
        <taxon>Burkholderia</taxon>
        <taxon>pseudomallei group</taxon>
    </lineage>
</organism>
<comment type="miscellaneous">
    <text>Unlike their eukaryotic orthologs the putative Burkholderia deoxyribonuclease-2 are probably not secreted from the cell, as they do not have a signal sequence.</text>
</comment>
<comment type="similarity">
    <text evidence="1">Belongs to the DNase II family.</text>
</comment>
<feature type="chain" id="PRO_0000230670" description="Putative deoxyribonuclease-2">
    <location>
        <begin position="1"/>
        <end position="350"/>
    </location>
</feature>
<feature type="strand" evidence="2">
    <location>
        <begin position="14"/>
        <end position="20"/>
    </location>
</feature>
<feature type="strand" evidence="2">
    <location>
        <begin position="24"/>
        <end position="27"/>
    </location>
</feature>
<feature type="strand" evidence="2">
    <location>
        <begin position="30"/>
        <end position="33"/>
    </location>
</feature>
<feature type="strand" evidence="2">
    <location>
        <begin position="38"/>
        <end position="41"/>
    </location>
</feature>
<feature type="turn" evidence="2">
    <location>
        <begin position="43"/>
        <end position="45"/>
    </location>
</feature>
<feature type="helix" evidence="2">
    <location>
        <begin position="61"/>
        <end position="70"/>
    </location>
</feature>
<feature type="strand" evidence="2">
    <location>
        <begin position="77"/>
        <end position="82"/>
    </location>
</feature>
<feature type="helix" evidence="2">
    <location>
        <begin position="88"/>
        <end position="90"/>
    </location>
</feature>
<feature type="strand" evidence="2">
    <location>
        <begin position="103"/>
        <end position="108"/>
    </location>
</feature>
<feature type="turn" evidence="2">
    <location>
        <begin position="109"/>
        <end position="112"/>
    </location>
</feature>
<feature type="strand" evidence="2">
    <location>
        <begin position="113"/>
        <end position="118"/>
    </location>
</feature>
<feature type="strand" evidence="3">
    <location>
        <begin position="127"/>
        <end position="129"/>
    </location>
</feature>
<feature type="strand" evidence="2">
    <location>
        <begin position="136"/>
        <end position="147"/>
    </location>
</feature>
<feature type="helix" evidence="2">
    <location>
        <begin position="148"/>
        <end position="160"/>
    </location>
</feature>
<feature type="strand" evidence="2">
    <location>
        <begin position="166"/>
        <end position="170"/>
    </location>
</feature>
<feature type="helix" evidence="2">
    <location>
        <begin position="179"/>
        <end position="183"/>
    </location>
</feature>
<feature type="strand" evidence="2">
    <location>
        <begin position="192"/>
        <end position="201"/>
    </location>
</feature>
<feature type="strand" evidence="2">
    <location>
        <begin position="207"/>
        <end position="213"/>
    </location>
</feature>
<feature type="helix" evidence="2">
    <location>
        <begin position="221"/>
        <end position="224"/>
    </location>
</feature>
<feature type="helix" evidence="2">
    <location>
        <begin position="226"/>
        <end position="230"/>
    </location>
</feature>
<feature type="strand" evidence="2">
    <location>
        <begin position="260"/>
        <end position="263"/>
    </location>
</feature>
<feature type="helix" evidence="2">
    <location>
        <begin position="265"/>
        <end position="267"/>
    </location>
</feature>
<feature type="strand" evidence="2">
    <location>
        <begin position="272"/>
        <end position="274"/>
    </location>
</feature>
<feature type="helix" evidence="2">
    <location>
        <begin position="275"/>
        <end position="277"/>
    </location>
</feature>
<feature type="strand" evidence="2">
    <location>
        <begin position="282"/>
        <end position="287"/>
    </location>
</feature>
<feature type="strand" evidence="2">
    <location>
        <begin position="290"/>
        <end position="295"/>
    </location>
</feature>
<feature type="strand" evidence="2">
    <location>
        <begin position="307"/>
        <end position="313"/>
    </location>
</feature>
<feature type="helix" evidence="2">
    <location>
        <begin position="315"/>
        <end position="322"/>
    </location>
</feature>
<feature type="strand" evidence="2">
    <location>
        <begin position="325"/>
        <end position="327"/>
    </location>
</feature>
<feature type="helix" evidence="2">
    <location>
        <begin position="335"/>
        <end position="344"/>
    </location>
</feature>
<keyword id="KW-0002">3D-structure</keyword>
<keyword id="KW-0255">Endonuclease</keyword>
<keyword id="KW-0378">Hydrolase</keyword>
<keyword id="KW-0540">Nuclease</keyword>
<dbReference type="EC" id="3.1.-.-"/>
<dbReference type="EMBL" id="CP000085">
    <property type="protein sequence ID" value="ABC35537.1"/>
    <property type="molecule type" value="Genomic_DNA"/>
</dbReference>
<dbReference type="RefSeq" id="WP_009895252.1">
    <property type="nucleotide sequence ID" value="NZ_CP008786.1"/>
</dbReference>
<dbReference type="PDB" id="5I3E">
    <property type="method" value="X-ray"/>
    <property type="resolution" value="1.65 A"/>
    <property type="chains" value="A/B=1-350"/>
</dbReference>
<dbReference type="PDB" id="5UNB">
    <property type="method" value="X-ray"/>
    <property type="resolution" value="1.75 A"/>
    <property type="chains" value="A/B=1-350"/>
</dbReference>
<dbReference type="PDBsum" id="5I3E"/>
<dbReference type="PDBsum" id="5UNB"/>
<dbReference type="SMR" id="Q2T8B0"/>
<dbReference type="GeneID" id="45117884"/>
<dbReference type="KEGG" id="bte:BTH_II0389"/>
<dbReference type="HOGENOM" id="CLU_053867_0_0_4"/>
<dbReference type="BRENDA" id="3.1.22.1">
    <property type="organism ID" value="8156"/>
</dbReference>
<dbReference type="Proteomes" id="UP000001930">
    <property type="component" value="Chromosome II"/>
</dbReference>
<dbReference type="GO" id="GO:0004531">
    <property type="term" value="F:deoxyribonuclease II activity"/>
    <property type="evidence" value="ECO:0007669"/>
    <property type="project" value="InterPro"/>
</dbReference>
<dbReference type="CDD" id="cd09120">
    <property type="entry name" value="PLDc_DNaseII_1"/>
    <property type="match status" value="1"/>
</dbReference>
<dbReference type="CDD" id="cd09121">
    <property type="entry name" value="PLDc_DNaseII_2"/>
    <property type="match status" value="1"/>
</dbReference>
<dbReference type="InterPro" id="IPR004947">
    <property type="entry name" value="DNase_II"/>
</dbReference>
<dbReference type="PANTHER" id="PTHR10858">
    <property type="entry name" value="DEOXYRIBONUCLEASE II"/>
    <property type="match status" value="1"/>
</dbReference>
<dbReference type="PANTHER" id="PTHR10858:SF23">
    <property type="entry name" value="DEOXYRIBONUCLEASE II"/>
    <property type="match status" value="1"/>
</dbReference>
<dbReference type="Pfam" id="PF03265">
    <property type="entry name" value="DNase_II"/>
    <property type="match status" value="1"/>
</dbReference>
<sequence>MAISPRDEQNRSVDLWFAYKVPKLTKDADSDSASGYEYVYYDRQVGAVQKSPNLMNDPKGALFYTLDSVFGDPGDTTGWILYNDEMPADANRSNNATLGHTKGVIAFDIASSSALWLLHSWPKYASPSVPGVPTPLYGQTFLCLSLDLATAGKLAAQMALHQQPQVYLPRTGGLDHTSPLYALTQPLNASAPGDSDSLDFKTRGGVPFKVIAKNRKWGKDFWNDLVGPTLKADMYVETWIRGKIPPVLDSDGVHKTYDIKFIDLRKLGAPWAWPETQDHAKWGITTTDNWVCVGDINRMVTQEKRGGGTIAFQDPKLWKALCETDLIIPPPGKTDAQARAMIRKTHEPAE</sequence>